<reference key="1">
    <citation type="journal article" date="1993" name="J. Mol. Biol.">
        <title>The gene locus of the proton-translocating NADH: ubiquinone oxidoreductase in Escherichia coli. Organization of the 14 genes and relationship between the derived proteins and subunits of mitochondrial complex I.</title>
        <authorList>
            <person name="Weidner U."/>
            <person name="Geier S."/>
            <person name="Ptock A."/>
            <person name="Friedrich T."/>
            <person name="Leif H."/>
            <person name="Weiss H."/>
        </authorList>
    </citation>
    <scope>NUCLEOTIDE SEQUENCE [GENOMIC DNA]</scope>
    <source>
        <strain>K12 / AN387</strain>
    </source>
</reference>
<reference key="2">
    <citation type="journal article" date="1994" name="J. Bacteriol.">
        <title>Mutations in NADH:ubiquinone oxidoreductase of Escherichia coli affect growth on mixed amino acids.</title>
        <authorList>
            <person name="Pruss B.M."/>
            <person name="Nelms J.M."/>
            <person name="Park C."/>
            <person name="Wolfe A.J."/>
        </authorList>
    </citation>
    <scope>NUCLEOTIDE SEQUENCE [GENOMIC DNA]</scope>
</reference>
<reference key="3">
    <citation type="journal article" date="1997" name="DNA Res.">
        <title>Construction of a contiguous 874-kb sequence of the Escherichia coli-K12 genome corresponding to 50.0-68.8 min on the linkage map and analysis of its sequence features.</title>
        <authorList>
            <person name="Yamamoto Y."/>
            <person name="Aiba H."/>
            <person name="Baba T."/>
            <person name="Hayashi K."/>
            <person name="Inada T."/>
            <person name="Isono K."/>
            <person name="Itoh T."/>
            <person name="Kimura S."/>
            <person name="Kitagawa M."/>
            <person name="Makino K."/>
            <person name="Miki T."/>
            <person name="Mitsuhashi N."/>
            <person name="Mizobuchi K."/>
            <person name="Mori H."/>
            <person name="Nakade S."/>
            <person name="Nakamura Y."/>
            <person name="Nashimoto H."/>
            <person name="Oshima T."/>
            <person name="Oyama S."/>
            <person name="Saito N."/>
            <person name="Sampei G."/>
            <person name="Satoh Y."/>
            <person name="Sivasundaram S."/>
            <person name="Tagami H."/>
            <person name="Takahashi H."/>
            <person name="Takeda J."/>
            <person name="Takemoto K."/>
            <person name="Uehara K."/>
            <person name="Wada C."/>
            <person name="Yamagata S."/>
            <person name="Horiuchi T."/>
        </authorList>
    </citation>
    <scope>NUCLEOTIDE SEQUENCE [LARGE SCALE GENOMIC DNA]</scope>
    <source>
        <strain>K12 / W3110 / ATCC 27325 / DSM 5911</strain>
    </source>
</reference>
<reference key="4">
    <citation type="journal article" date="1997" name="Science">
        <title>The complete genome sequence of Escherichia coli K-12.</title>
        <authorList>
            <person name="Blattner F.R."/>
            <person name="Plunkett G. III"/>
            <person name="Bloch C.A."/>
            <person name="Perna N.T."/>
            <person name="Burland V."/>
            <person name="Riley M."/>
            <person name="Collado-Vides J."/>
            <person name="Glasner J.D."/>
            <person name="Rode C.K."/>
            <person name="Mayhew G.F."/>
            <person name="Gregor J."/>
            <person name="Davis N.W."/>
            <person name="Kirkpatrick H.A."/>
            <person name="Goeden M.A."/>
            <person name="Rose D.J."/>
            <person name="Mau B."/>
            <person name="Shao Y."/>
        </authorList>
    </citation>
    <scope>NUCLEOTIDE SEQUENCE [LARGE SCALE GENOMIC DNA]</scope>
    <source>
        <strain>K12 / MG1655 / ATCC 47076</strain>
    </source>
</reference>
<reference key="5">
    <citation type="journal article" date="2006" name="Mol. Syst. Biol.">
        <title>Highly accurate genome sequences of Escherichia coli K-12 strains MG1655 and W3110.</title>
        <authorList>
            <person name="Hayashi K."/>
            <person name="Morooka N."/>
            <person name="Yamamoto Y."/>
            <person name="Fujita K."/>
            <person name="Isono K."/>
            <person name="Choi S."/>
            <person name="Ohtsubo E."/>
            <person name="Baba T."/>
            <person name="Wanner B.L."/>
            <person name="Mori H."/>
            <person name="Horiuchi T."/>
        </authorList>
    </citation>
    <scope>NUCLEOTIDE SEQUENCE [LARGE SCALE GENOMIC DNA]</scope>
    <source>
        <strain>K12 / W3110 / ATCC 27325 / DSM 5911</strain>
    </source>
</reference>
<reference key="6">
    <citation type="journal article" date="1995" name="Eur. J. Biochem.">
        <title>Isolation and characterization of the proton-translocating NADH: ubiquinone oxidoreductase from Escherichia coli.</title>
        <authorList>
            <person name="Leif H."/>
            <person name="Sled V.D."/>
            <person name="Ohnishi T."/>
            <person name="Weiss H."/>
            <person name="Friedrich T."/>
        </authorList>
    </citation>
    <scope>PROTEIN SEQUENCE OF 1-5</scope>
</reference>
<name>NUOE_ECOLI</name>
<protein>
    <recommendedName>
        <fullName>NADH-quinone oxidoreductase subunit E</fullName>
        <ecNumber>7.1.1.-</ecNumber>
    </recommendedName>
    <alternativeName>
        <fullName>NADH dehydrogenase I subunit E</fullName>
    </alternativeName>
    <alternativeName>
        <fullName>NDH-1 subunit E</fullName>
    </alternativeName>
    <alternativeName>
        <fullName>NUO5</fullName>
    </alternativeName>
</protein>
<keyword id="KW-0001">2Fe-2S</keyword>
<keyword id="KW-0002">3D-structure</keyword>
<keyword id="KW-0903">Direct protein sequencing</keyword>
<keyword id="KW-0408">Iron</keyword>
<keyword id="KW-0411">Iron-sulfur</keyword>
<keyword id="KW-0479">Metal-binding</keyword>
<keyword id="KW-0520">NAD</keyword>
<keyword id="KW-0874">Quinone</keyword>
<keyword id="KW-1185">Reference proteome</keyword>
<keyword id="KW-1278">Translocase</keyword>
<keyword id="KW-0830">Ubiquinone</keyword>
<gene>
    <name type="primary">nuoE</name>
    <name type="ordered locus">b2285</name>
    <name type="ordered locus">JW2280</name>
</gene>
<organism>
    <name type="scientific">Escherichia coli (strain K12)</name>
    <dbReference type="NCBI Taxonomy" id="83333"/>
    <lineage>
        <taxon>Bacteria</taxon>
        <taxon>Pseudomonadati</taxon>
        <taxon>Pseudomonadota</taxon>
        <taxon>Gammaproteobacteria</taxon>
        <taxon>Enterobacterales</taxon>
        <taxon>Enterobacteriaceae</taxon>
        <taxon>Escherichia</taxon>
    </lineage>
</organism>
<accession>P0AFD1</accession>
<accession>P33601</accession>
<proteinExistence type="evidence at protein level"/>
<feature type="chain" id="PRO_0000118691" description="NADH-quinone oxidoreductase subunit E">
    <location>
        <begin position="1"/>
        <end position="166"/>
    </location>
</feature>
<feature type="binding site" evidence="1">
    <location>
        <position position="92"/>
    </location>
    <ligand>
        <name>[2Fe-2S] cluster</name>
        <dbReference type="ChEBI" id="CHEBI:190135"/>
    </ligand>
</feature>
<feature type="binding site" evidence="1">
    <location>
        <position position="97"/>
    </location>
    <ligand>
        <name>[2Fe-2S] cluster</name>
        <dbReference type="ChEBI" id="CHEBI:190135"/>
    </ligand>
</feature>
<feature type="binding site" evidence="1">
    <location>
        <position position="133"/>
    </location>
    <ligand>
        <name>[2Fe-2S] cluster</name>
        <dbReference type="ChEBI" id="CHEBI:190135"/>
    </ligand>
</feature>
<feature type="binding site" evidence="1">
    <location>
        <position position="137"/>
    </location>
    <ligand>
        <name>[2Fe-2S] cluster</name>
        <dbReference type="ChEBI" id="CHEBI:190135"/>
    </ligand>
</feature>
<feature type="sequence conflict" description="In Ref. 1; CAA48364." evidence="2" ref="1">
    <original>I</original>
    <variation>V</variation>
    <location>
        <position position="22"/>
    </location>
</feature>
<feature type="helix" evidence="3">
    <location>
        <begin position="16"/>
        <end position="25"/>
    </location>
</feature>
<feature type="helix" evidence="3">
    <location>
        <begin position="26"/>
        <end position="28"/>
    </location>
</feature>
<feature type="strand" evidence="3">
    <location>
        <begin position="29"/>
        <end position="31"/>
    </location>
</feature>
<feature type="helix" evidence="3">
    <location>
        <begin position="32"/>
        <end position="35"/>
    </location>
</feature>
<feature type="helix" evidence="3">
    <location>
        <begin position="36"/>
        <end position="47"/>
    </location>
</feature>
<feature type="helix" evidence="3">
    <location>
        <begin position="53"/>
        <end position="62"/>
    </location>
</feature>
<feature type="helix" evidence="3">
    <location>
        <begin position="66"/>
        <end position="75"/>
    </location>
</feature>
<feature type="strand" evidence="3">
    <location>
        <begin position="76"/>
        <end position="79"/>
    </location>
</feature>
<feature type="strand" evidence="3">
    <location>
        <begin position="86"/>
        <end position="92"/>
    </location>
</feature>
<feature type="helix" evidence="3">
    <location>
        <begin position="95"/>
        <end position="99"/>
    </location>
</feature>
<feature type="helix" evidence="3">
    <location>
        <begin position="102"/>
        <end position="112"/>
    </location>
</feature>
<feature type="strand" evidence="3">
    <location>
        <begin position="122"/>
        <end position="131"/>
    </location>
</feature>
<feature type="helix" evidence="3">
    <location>
        <begin position="137"/>
        <end position="139"/>
    </location>
</feature>
<feature type="strand" evidence="3">
    <location>
        <begin position="143"/>
        <end position="145"/>
    </location>
</feature>
<feature type="strand" evidence="3">
    <location>
        <begin position="148"/>
        <end position="150"/>
    </location>
</feature>
<feature type="turn" evidence="4">
    <location>
        <begin position="155"/>
        <end position="157"/>
    </location>
</feature>
<feature type="helix" evidence="3">
    <location>
        <begin position="158"/>
        <end position="163"/>
    </location>
</feature>
<sequence length="166" mass="18590">MHENQQPQTEAFELSAAEREAIEHEMHHYEDPRAASIEALKIVQKQRGWVPDGAIHAIADVLGIPASDVEGVATFYSQIFRQPVGRHVIRYCDSVVCHINGYQGIQAALEKKLNIKPGQTTFDGRFTLLPTCCLGNCDKGPNMMIDEDTHAHLTPEAIPELLERYK</sequence>
<evidence type="ECO:0000255" key="1"/>
<evidence type="ECO:0000305" key="2"/>
<evidence type="ECO:0007829" key="3">
    <source>
        <dbReference type="PDB" id="7NZ1"/>
    </source>
</evidence>
<evidence type="ECO:0007829" key="4">
    <source>
        <dbReference type="PDB" id="7Z7V"/>
    </source>
</evidence>
<dbReference type="EC" id="7.1.1.-"/>
<dbReference type="EMBL" id="X68301">
    <property type="protein sequence ID" value="CAA48364.1"/>
    <property type="molecule type" value="Genomic_DNA"/>
</dbReference>
<dbReference type="EMBL" id="L25055">
    <property type="protein sequence ID" value="AAA03536.1"/>
    <property type="molecule type" value="Unassigned_DNA"/>
</dbReference>
<dbReference type="EMBL" id="U00096">
    <property type="protein sequence ID" value="AAC75345.1"/>
    <property type="molecule type" value="Genomic_DNA"/>
</dbReference>
<dbReference type="EMBL" id="AP009048">
    <property type="protein sequence ID" value="BAA16114.1"/>
    <property type="molecule type" value="Genomic_DNA"/>
</dbReference>
<dbReference type="PIR" id="C65000">
    <property type="entry name" value="C65000"/>
</dbReference>
<dbReference type="RefSeq" id="NP_416788.1">
    <property type="nucleotide sequence ID" value="NC_000913.3"/>
</dbReference>
<dbReference type="RefSeq" id="WP_000545042.1">
    <property type="nucleotide sequence ID" value="NZ_STEB01000008.1"/>
</dbReference>
<dbReference type="PDB" id="7AWT">
    <property type="method" value="EM"/>
    <property type="resolution" value="2.73 A"/>
    <property type="chains" value="E=1-166"/>
</dbReference>
<dbReference type="PDB" id="7NYR">
    <property type="method" value="EM"/>
    <property type="resolution" value="3.30 A"/>
    <property type="chains" value="E=1-166"/>
</dbReference>
<dbReference type="PDB" id="7NYU">
    <property type="method" value="EM"/>
    <property type="resolution" value="3.80 A"/>
    <property type="chains" value="E=1-166"/>
</dbReference>
<dbReference type="PDB" id="7NYV">
    <property type="method" value="EM"/>
    <property type="resolution" value="3.70 A"/>
    <property type="chains" value="E=1-166"/>
</dbReference>
<dbReference type="PDB" id="7NZ1">
    <property type="method" value="EM"/>
    <property type="resolution" value="2.10 A"/>
    <property type="chains" value="E=1-166"/>
</dbReference>
<dbReference type="PDB" id="7P61">
    <property type="method" value="EM"/>
    <property type="resolution" value="3.20 A"/>
    <property type="chains" value="E=11-166"/>
</dbReference>
<dbReference type="PDB" id="7P62">
    <property type="method" value="EM"/>
    <property type="resolution" value="3.60 A"/>
    <property type="chains" value="E=11-166"/>
</dbReference>
<dbReference type="PDB" id="7P63">
    <property type="method" value="EM"/>
    <property type="resolution" value="3.40 A"/>
    <property type="chains" value="E=1-166"/>
</dbReference>
<dbReference type="PDB" id="7P64">
    <property type="method" value="EM"/>
    <property type="resolution" value="2.50 A"/>
    <property type="chains" value="E=11-166"/>
</dbReference>
<dbReference type="PDB" id="7P69">
    <property type="method" value="EM"/>
    <property type="resolution" value="3.00 A"/>
    <property type="chains" value="E=11-166"/>
</dbReference>
<dbReference type="PDB" id="7P7C">
    <property type="method" value="EM"/>
    <property type="resolution" value="2.40 A"/>
    <property type="chains" value="E=11-166"/>
</dbReference>
<dbReference type="PDB" id="7P7E">
    <property type="method" value="EM"/>
    <property type="resolution" value="2.70 A"/>
    <property type="chains" value="E=11-166"/>
</dbReference>
<dbReference type="PDB" id="7P7J">
    <property type="method" value="EM"/>
    <property type="resolution" value="2.70 A"/>
    <property type="chains" value="E=11-166"/>
</dbReference>
<dbReference type="PDB" id="7P7K">
    <property type="method" value="EM"/>
    <property type="resolution" value="3.10 A"/>
    <property type="chains" value="E=11-166"/>
</dbReference>
<dbReference type="PDB" id="7P7L">
    <property type="method" value="EM"/>
    <property type="resolution" value="3.00 A"/>
    <property type="chains" value="E=11-166"/>
</dbReference>
<dbReference type="PDB" id="7P7M">
    <property type="method" value="EM"/>
    <property type="resolution" value="3.20 A"/>
    <property type="chains" value="E=11-166"/>
</dbReference>
<dbReference type="PDB" id="7Z7R">
    <property type="method" value="EM"/>
    <property type="resolution" value="3.36 A"/>
    <property type="chains" value="E=1-166"/>
</dbReference>
<dbReference type="PDB" id="7Z7S">
    <property type="method" value="EM"/>
    <property type="resolution" value="2.40 A"/>
    <property type="chains" value="E=1-166"/>
</dbReference>
<dbReference type="PDB" id="7Z7T">
    <property type="method" value="EM"/>
    <property type="resolution" value="3.10 A"/>
    <property type="chains" value="E=1-166"/>
</dbReference>
<dbReference type="PDB" id="7Z7V">
    <property type="method" value="EM"/>
    <property type="resolution" value="2.29 A"/>
    <property type="chains" value="E=1-166"/>
</dbReference>
<dbReference type="PDB" id="7Z80">
    <property type="method" value="EM"/>
    <property type="resolution" value="2.93 A"/>
    <property type="chains" value="E=1-166"/>
</dbReference>
<dbReference type="PDB" id="7Z83">
    <property type="method" value="EM"/>
    <property type="resolution" value="2.88 A"/>
    <property type="chains" value="E=1-166"/>
</dbReference>
<dbReference type="PDB" id="7Z84">
    <property type="method" value="EM"/>
    <property type="resolution" value="2.87 A"/>
    <property type="chains" value="E=1-166"/>
</dbReference>
<dbReference type="PDB" id="7ZC5">
    <property type="method" value="EM"/>
    <property type="resolution" value="3.00 A"/>
    <property type="chains" value="E=1-166"/>
</dbReference>
<dbReference type="PDB" id="7ZCI">
    <property type="method" value="EM"/>
    <property type="resolution" value="2.69 A"/>
    <property type="chains" value="E=1-166"/>
</dbReference>
<dbReference type="PDBsum" id="7AWT"/>
<dbReference type="PDBsum" id="7NYR"/>
<dbReference type="PDBsum" id="7NYU"/>
<dbReference type="PDBsum" id="7NYV"/>
<dbReference type="PDBsum" id="7NZ1"/>
<dbReference type="PDBsum" id="7P61"/>
<dbReference type="PDBsum" id="7P62"/>
<dbReference type="PDBsum" id="7P63"/>
<dbReference type="PDBsum" id="7P64"/>
<dbReference type="PDBsum" id="7P69"/>
<dbReference type="PDBsum" id="7P7C"/>
<dbReference type="PDBsum" id="7P7E"/>
<dbReference type="PDBsum" id="7P7J"/>
<dbReference type="PDBsum" id="7P7K"/>
<dbReference type="PDBsum" id="7P7L"/>
<dbReference type="PDBsum" id="7P7M"/>
<dbReference type="PDBsum" id="7Z7R"/>
<dbReference type="PDBsum" id="7Z7S"/>
<dbReference type="PDBsum" id="7Z7T"/>
<dbReference type="PDBsum" id="7Z7V"/>
<dbReference type="PDBsum" id="7Z80"/>
<dbReference type="PDBsum" id="7Z83"/>
<dbReference type="PDBsum" id="7Z84"/>
<dbReference type="PDBsum" id="7ZC5"/>
<dbReference type="PDBsum" id="7ZCI"/>
<dbReference type="EMDB" id="EMD-12653"/>
<dbReference type="EMDB" id="EMD-12654"/>
<dbReference type="EMDB" id="EMD-12655"/>
<dbReference type="EMDB" id="EMD-12661"/>
<dbReference type="SMR" id="P0AFD1"/>
<dbReference type="BioGRID" id="4262977">
    <property type="interactions" value="70"/>
</dbReference>
<dbReference type="BioGRID" id="851087">
    <property type="interactions" value="6"/>
</dbReference>
<dbReference type="ComplexPortal" id="CPX-243">
    <property type="entry name" value="Respiratory chain complex I"/>
</dbReference>
<dbReference type="DIP" id="DIP-35917N"/>
<dbReference type="FunCoup" id="P0AFD1">
    <property type="interactions" value="728"/>
</dbReference>
<dbReference type="IntAct" id="P0AFD1">
    <property type="interactions" value="31"/>
</dbReference>
<dbReference type="STRING" id="511145.b2285"/>
<dbReference type="TCDB" id="3.D.1.1.1">
    <property type="family name" value="the h+ or na+-translocating nadh dehydrogenase (ndh) family"/>
</dbReference>
<dbReference type="jPOST" id="P0AFD1"/>
<dbReference type="PaxDb" id="511145-b2285"/>
<dbReference type="EnsemblBacteria" id="AAC75345">
    <property type="protein sequence ID" value="AAC75345"/>
    <property type="gene ID" value="b2285"/>
</dbReference>
<dbReference type="GeneID" id="93774889"/>
<dbReference type="GeneID" id="946746"/>
<dbReference type="KEGG" id="ecj:JW2280"/>
<dbReference type="KEGG" id="eco:b2285"/>
<dbReference type="KEGG" id="ecoc:C3026_12750"/>
<dbReference type="PATRIC" id="fig|1411691.4.peg.4451"/>
<dbReference type="EchoBASE" id="EB2010"/>
<dbReference type="eggNOG" id="COG1905">
    <property type="taxonomic scope" value="Bacteria"/>
</dbReference>
<dbReference type="HOGENOM" id="CLU_054362_2_0_6"/>
<dbReference type="InParanoid" id="P0AFD1"/>
<dbReference type="OMA" id="HIIRYCD"/>
<dbReference type="OrthoDB" id="9807941at2"/>
<dbReference type="PhylomeDB" id="P0AFD1"/>
<dbReference type="BioCyc" id="EcoCyc:NUOE-MONOMER"/>
<dbReference type="BioCyc" id="MetaCyc:NUOE-MONOMER"/>
<dbReference type="PRO" id="PR:P0AFD1"/>
<dbReference type="Proteomes" id="UP000000625">
    <property type="component" value="Chromosome"/>
</dbReference>
<dbReference type="GO" id="GO:0016020">
    <property type="term" value="C:membrane"/>
    <property type="evidence" value="ECO:0000314"/>
    <property type="project" value="EcoCyc"/>
</dbReference>
<dbReference type="GO" id="GO:0030964">
    <property type="term" value="C:NADH dehydrogenase complex"/>
    <property type="evidence" value="ECO:0000314"/>
    <property type="project" value="EcoliWiki"/>
</dbReference>
<dbReference type="GO" id="GO:0005886">
    <property type="term" value="C:plasma membrane"/>
    <property type="evidence" value="ECO:0000314"/>
    <property type="project" value="EcoliWiki"/>
</dbReference>
<dbReference type="GO" id="GO:0045271">
    <property type="term" value="C:respiratory chain complex I"/>
    <property type="evidence" value="ECO:0000303"/>
    <property type="project" value="ComplexPortal"/>
</dbReference>
<dbReference type="GO" id="GO:0051537">
    <property type="term" value="F:2 iron, 2 sulfur cluster binding"/>
    <property type="evidence" value="ECO:0000315"/>
    <property type="project" value="EcoCyc"/>
</dbReference>
<dbReference type="GO" id="GO:0046872">
    <property type="term" value="F:metal ion binding"/>
    <property type="evidence" value="ECO:0007669"/>
    <property type="project" value="UniProtKB-KW"/>
</dbReference>
<dbReference type="GO" id="GO:0016491">
    <property type="term" value="F:oxidoreductase activity"/>
    <property type="evidence" value="ECO:0007669"/>
    <property type="project" value="InterPro"/>
</dbReference>
<dbReference type="GO" id="GO:0048038">
    <property type="term" value="F:quinone binding"/>
    <property type="evidence" value="ECO:0007669"/>
    <property type="project" value="UniProtKB-KW"/>
</dbReference>
<dbReference type="GO" id="GO:1902600">
    <property type="term" value="P:proton transmembrane transport"/>
    <property type="evidence" value="ECO:0007669"/>
    <property type="project" value="GOC"/>
</dbReference>
<dbReference type="GO" id="GO:0022904">
    <property type="term" value="P:respiratory electron transport chain"/>
    <property type="evidence" value="ECO:0000314"/>
    <property type="project" value="ComplexPortal"/>
</dbReference>
<dbReference type="CDD" id="cd03064">
    <property type="entry name" value="TRX_Fd_NuoE"/>
    <property type="match status" value="1"/>
</dbReference>
<dbReference type="FunFam" id="1.10.10.1590:FF:000001">
    <property type="entry name" value="NADH-quinone oxidoreductase subunit E"/>
    <property type="match status" value="1"/>
</dbReference>
<dbReference type="FunFam" id="3.40.30.10:FF:000015">
    <property type="entry name" value="NADH-quinone oxidoreductase subunit E"/>
    <property type="match status" value="1"/>
</dbReference>
<dbReference type="Gene3D" id="3.40.30.10">
    <property type="entry name" value="Glutaredoxin"/>
    <property type="match status" value="1"/>
</dbReference>
<dbReference type="Gene3D" id="1.10.10.1590">
    <property type="entry name" value="NADH-quinone oxidoreductase subunit E"/>
    <property type="match status" value="1"/>
</dbReference>
<dbReference type="InterPro" id="IPR002023">
    <property type="entry name" value="NuoE-like"/>
</dbReference>
<dbReference type="InterPro" id="IPR042128">
    <property type="entry name" value="NuoE_dom"/>
</dbReference>
<dbReference type="InterPro" id="IPR041921">
    <property type="entry name" value="NuoE_N"/>
</dbReference>
<dbReference type="InterPro" id="IPR036249">
    <property type="entry name" value="Thioredoxin-like_sf"/>
</dbReference>
<dbReference type="NCBIfam" id="TIGR01958">
    <property type="entry name" value="nuoE_fam"/>
    <property type="match status" value="1"/>
</dbReference>
<dbReference type="NCBIfam" id="NF005722">
    <property type="entry name" value="PRK07539.1-2"/>
    <property type="match status" value="1"/>
</dbReference>
<dbReference type="PANTHER" id="PTHR10371:SF3">
    <property type="entry name" value="NADH DEHYDROGENASE [UBIQUINONE] FLAVOPROTEIN 2, MITOCHONDRIAL"/>
    <property type="match status" value="1"/>
</dbReference>
<dbReference type="PANTHER" id="PTHR10371">
    <property type="entry name" value="NADH DEHYDROGENASE UBIQUINONE FLAVOPROTEIN 2, MITOCHONDRIAL"/>
    <property type="match status" value="1"/>
</dbReference>
<dbReference type="Pfam" id="PF01257">
    <property type="entry name" value="2Fe-2S_thioredx"/>
    <property type="match status" value="1"/>
</dbReference>
<dbReference type="PIRSF" id="PIRSF000216">
    <property type="entry name" value="NADH_DH_24kDa"/>
    <property type="match status" value="1"/>
</dbReference>
<dbReference type="SUPFAM" id="SSF52833">
    <property type="entry name" value="Thioredoxin-like"/>
    <property type="match status" value="1"/>
</dbReference>
<dbReference type="PROSITE" id="PS01099">
    <property type="entry name" value="COMPLEX1_24K"/>
    <property type="match status" value="1"/>
</dbReference>
<comment type="function">
    <text>NDH-1 shuttles electrons from NADH, via FMN and iron-sulfur (Fe-S) centers, to quinones in the respiratory chain. The immediate electron acceptor for the enzyme in this species is believed to be ubiquinone. Couples the redox reaction to proton translocation (for every two electrons transferred, four hydrogen ions are translocated across the cytoplasmic membrane), and thus conserves the redox energy in a proton gradient.</text>
</comment>
<comment type="catalytic activity">
    <reaction>
        <text>a quinone + NADH + 5 H(+)(in) = a quinol + NAD(+) + 4 H(+)(out)</text>
        <dbReference type="Rhea" id="RHEA:57888"/>
        <dbReference type="ChEBI" id="CHEBI:15378"/>
        <dbReference type="ChEBI" id="CHEBI:24646"/>
        <dbReference type="ChEBI" id="CHEBI:57540"/>
        <dbReference type="ChEBI" id="CHEBI:57945"/>
        <dbReference type="ChEBI" id="CHEBI:132124"/>
    </reaction>
</comment>
<comment type="cofactor">
    <cofactor evidence="2">
        <name>[2Fe-2S] cluster</name>
        <dbReference type="ChEBI" id="CHEBI:190135"/>
    </cofactor>
    <text evidence="2">Binds 1 [2Fe-2S] cluster.</text>
</comment>
<comment type="subunit">
    <text>Composed of 13 different subunits. Subunits NuoCD, E, F, and G constitute the peripheral sector of the complex.</text>
</comment>
<comment type="interaction">
    <interactant intactId="EBI-1117136">
        <id>P0AFD1</id>
    </interactant>
    <interactant intactId="EBI-559737">
        <id>P33602</id>
        <label>nuoG</label>
    </interactant>
    <organismsDiffer>false</organismsDiffer>
    <experiments>4</experiments>
</comment>
<comment type="similarity">
    <text evidence="2">Belongs to the complex I 24 kDa subunit family.</text>
</comment>